<evidence type="ECO:0000255" key="1">
    <source>
        <dbReference type="HAMAP-Rule" id="MF_03113"/>
    </source>
</evidence>
<gene>
    <name evidence="1" type="primary">GET1</name>
    <name type="ORF">HCBG_02249</name>
</gene>
<protein>
    <recommendedName>
        <fullName evidence="1">Protein GET1</fullName>
    </recommendedName>
    <alternativeName>
        <fullName evidence="1">Guided entry of tail-anchored proteins 1</fullName>
    </alternativeName>
</protein>
<proteinExistence type="inferred from homology"/>
<organism>
    <name type="scientific">Ajellomyces capsulatus (strain G186AR / H82 / ATCC MYA-2454 / RMSCC 2432)</name>
    <name type="common">Darling's disease fungus</name>
    <name type="synonym">Histoplasma capsulatum</name>
    <dbReference type="NCBI Taxonomy" id="447093"/>
    <lineage>
        <taxon>Eukaryota</taxon>
        <taxon>Fungi</taxon>
        <taxon>Dikarya</taxon>
        <taxon>Ascomycota</taxon>
        <taxon>Pezizomycotina</taxon>
        <taxon>Eurotiomycetes</taxon>
        <taxon>Eurotiomycetidae</taxon>
        <taxon>Onygenales</taxon>
        <taxon>Ajellomycetaceae</taxon>
        <taxon>Histoplasma</taxon>
    </lineage>
</organism>
<dbReference type="EMBL" id="GG663365">
    <property type="protein sequence ID" value="EEH08712.1"/>
    <property type="molecule type" value="Genomic_DNA"/>
</dbReference>
<dbReference type="SMR" id="C0NIJ2"/>
<dbReference type="STRING" id="447093.C0NIJ2"/>
<dbReference type="VEuPathDB" id="FungiDB:I7I50_10915"/>
<dbReference type="HOGENOM" id="CLU_089418_1_0_1"/>
<dbReference type="InParanoid" id="C0NIJ2"/>
<dbReference type="Proteomes" id="UP000001631">
    <property type="component" value="Unassembled WGS sequence"/>
</dbReference>
<dbReference type="GO" id="GO:0005789">
    <property type="term" value="C:endoplasmic reticulum membrane"/>
    <property type="evidence" value="ECO:0007669"/>
    <property type="project" value="UniProtKB-SubCell"/>
</dbReference>
<dbReference type="GO" id="GO:0043529">
    <property type="term" value="C:GET complex"/>
    <property type="evidence" value="ECO:0007669"/>
    <property type="project" value="InterPro"/>
</dbReference>
<dbReference type="GO" id="GO:0043495">
    <property type="term" value="F:protein-membrane adaptor activity"/>
    <property type="evidence" value="ECO:0007669"/>
    <property type="project" value="TreeGrafter"/>
</dbReference>
<dbReference type="GO" id="GO:0071816">
    <property type="term" value="P:tail-anchored membrane protein insertion into ER membrane"/>
    <property type="evidence" value="ECO:0007669"/>
    <property type="project" value="InterPro"/>
</dbReference>
<dbReference type="FunFam" id="1.10.287.660:FF:000006">
    <property type="entry name" value="Protein GET1"/>
    <property type="match status" value="1"/>
</dbReference>
<dbReference type="Gene3D" id="1.10.287.660">
    <property type="entry name" value="Helix hairpin bin"/>
    <property type="match status" value="1"/>
</dbReference>
<dbReference type="HAMAP" id="MF_03113">
    <property type="entry name" value="Get1"/>
    <property type="match status" value="1"/>
</dbReference>
<dbReference type="InterPro" id="IPR028945">
    <property type="entry name" value="Get1"/>
</dbReference>
<dbReference type="InterPro" id="IPR027538">
    <property type="entry name" value="Get1_fungi"/>
</dbReference>
<dbReference type="InterPro" id="IPR029012">
    <property type="entry name" value="Helix_hairpin_bin_sf"/>
</dbReference>
<dbReference type="PANTHER" id="PTHR42650:SF1">
    <property type="entry name" value="GUIDED ENTRY OF TAIL-ANCHORED PROTEINS FACTOR 1"/>
    <property type="match status" value="1"/>
</dbReference>
<dbReference type="PANTHER" id="PTHR42650">
    <property type="entry name" value="TAIL-ANCHORED PROTEIN INSERTION RECEPTOR WRB"/>
    <property type="match status" value="1"/>
</dbReference>
<dbReference type="Pfam" id="PF04420">
    <property type="entry name" value="CHD5"/>
    <property type="match status" value="1"/>
</dbReference>
<sequence length="206" mass="23228">MPSLLITVLFLNVIIYVVNTVGAATVDGLLWLLYIQLPTGTSQIAREQRHMKREVVQLKHEMSSTSSQDEFAKWAKLRRRHDKALEAYEAKNNELTQSKSTFDMTIKIARWAATSGLMLFLQFWYSKTPIFTLPPGWIPWQVQWVLSFPRAPMGTVSIQIWGGACATVVALVGDAMKASLAYVSKPKIDRIKLGATMEGKEGKKRQ</sequence>
<comment type="function">
    <text evidence="1">Required for the post-translational delivery of tail-anchored (TA) proteins to the endoplasmic reticulum. Acts as a membrane receptor for soluble GET3, which recognizes and selectively binds the transmembrane domain of TA proteins in the cytosol.</text>
</comment>
<comment type="subunit">
    <text evidence="1">Interacts with GET3.</text>
</comment>
<comment type="subcellular location">
    <subcellularLocation>
        <location evidence="1">Endoplasmic reticulum membrane</location>
        <topology evidence="1">Multi-pass membrane protein</topology>
    </subcellularLocation>
</comment>
<comment type="similarity">
    <text evidence="1">Belongs to the WRB/GET1 family.</text>
</comment>
<feature type="chain" id="PRO_0000388569" description="Protein GET1">
    <location>
        <begin position="1"/>
        <end position="206"/>
    </location>
</feature>
<feature type="topological domain" description="Lumenal" evidence="1">
    <location>
        <begin position="1"/>
        <end position="4"/>
    </location>
</feature>
<feature type="transmembrane region" description="Helical" evidence="1">
    <location>
        <begin position="5"/>
        <end position="24"/>
    </location>
</feature>
<feature type="topological domain" description="Cytoplasmic" evidence="1">
    <location>
        <begin position="25"/>
        <end position="110"/>
    </location>
</feature>
<feature type="transmembrane region" description="Helical" evidence="1">
    <location>
        <begin position="111"/>
        <end position="131"/>
    </location>
</feature>
<feature type="topological domain" description="Lumenal" evidence="1">
    <location>
        <begin position="132"/>
        <end position="155"/>
    </location>
</feature>
<feature type="transmembrane region" description="Helical" evidence="1">
    <location>
        <begin position="156"/>
        <end position="172"/>
    </location>
</feature>
<feature type="topological domain" description="Cytoplasmic" evidence="1">
    <location>
        <begin position="173"/>
        <end position="206"/>
    </location>
</feature>
<feature type="coiled-coil region" evidence="1">
    <location>
        <begin position="75"/>
        <end position="100"/>
    </location>
</feature>
<keyword id="KW-0175">Coiled coil</keyword>
<keyword id="KW-0256">Endoplasmic reticulum</keyword>
<keyword id="KW-0472">Membrane</keyword>
<keyword id="KW-1185">Reference proteome</keyword>
<keyword id="KW-0812">Transmembrane</keyword>
<keyword id="KW-1133">Transmembrane helix</keyword>
<keyword id="KW-0813">Transport</keyword>
<name>GET1_AJECG</name>
<accession>C0NIJ2</accession>
<reference key="1">
    <citation type="submission" date="2009-02" db="EMBL/GenBank/DDBJ databases">
        <title>The genome sequence of Ajellomyces capsulatus strain G186AR.</title>
        <authorList>
            <person name="Champion M."/>
            <person name="Cuomo C.A."/>
            <person name="Ma L.-J."/>
            <person name="Henn M.R."/>
            <person name="Sil A."/>
            <person name="Goldman B."/>
            <person name="Young S.K."/>
            <person name="Kodira C.D."/>
            <person name="Zeng Q."/>
            <person name="Koehrsen M."/>
            <person name="Alvarado L."/>
            <person name="Berlin A."/>
            <person name="Borenstein D."/>
            <person name="Chen Z."/>
            <person name="Engels R."/>
            <person name="Freedman E."/>
            <person name="Gellesch M."/>
            <person name="Goldberg J."/>
            <person name="Griggs A."/>
            <person name="Gujja S."/>
            <person name="Heiman D."/>
            <person name="Hepburn T."/>
            <person name="Howarth C."/>
            <person name="Jen D."/>
            <person name="Larson L."/>
            <person name="Lewis B."/>
            <person name="Mehta T."/>
            <person name="Park D."/>
            <person name="Pearson M."/>
            <person name="Roberts A."/>
            <person name="Saif S."/>
            <person name="Shea T."/>
            <person name="Shenoy N."/>
            <person name="Sisk P."/>
            <person name="Stolte C."/>
            <person name="Sykes S."/>
            <person name="Walk T."/>
            <person name="White J."/>
            <person name="Yandava C."/>
            <person name="Klein B."/>
            <person name="McEwen J.G."/>
            <person name="Puccia R."/>
            <person name="Goldman G.H."/>
            <person name="Felipe M.S."/>
            <person name="Nino-Vega G."/>
            <person name="San-Blas G."/>
            <person name="Taylor J."/>
            <person name="Mendoza L."/>
            <person name="Galagan J.E."/>
            <person name="Nusbaum C."/>
            <person name="Birren B.W."/>
        </authorList>
    </citation>
    <scope>NUCLEOTIDE SEQUENCE [LARGE SCALE GENOMIC DNA]</scope>
    <source>
        <strain>G186AR / H82 / ATCC MYA-2454 / RMSCC 2432</strain>
    </source>
</reference>